<gene>
    <name evidence="1" type="primary">hisD</name>
    <name type="ordered locus">SAB2554c</name>
</gene>
<organism>
    <name type="scientific">Staphylococcus aureus (strain bovine RF122 / ET3-1)</name>
    <dbReference type="NCBI Taxonomy" id="273036"/>
    <lineage>
        <taxon>Bacteria</taxon>
        <taxon>Bacillati</taxon>
        <taxon>Bacillota</taxon>
        <taxon>Bacilli</taxon>
        <taxon>Bacillales</taxon>
        <taxon>Staphylococcaceae</taxon>
        <taxon>Staphylococcus</taxon>
    </lineage>
</organism>
<reference key="1">
    <citation type="journal article" date="2007" name="PLoS ONE">
        <title>Molecular correlates of host specialization in Staphylococcus aureus.</title>
        <authorList>
            <person name="Herron-Olson L."/>
            <person name="Fitzgerald J.R."/>
            <person name="Musser J.M."/>
            <person name="Kapur V."/>
        </authorList>
    </citation>
    <scope>NUCLEOTIDE SEQUENCE [LARGE SCALE GENOMIC DNA]</scope>
    <source>
        <strain>bovine RF122 / ET3-1</strain>
    </source>
</reference>
<keyword id="KW-0028">Amino-acid biosynthesis</keyword>
<keyword id="KW-0368">Histidine biosynthesis</keyword>
<keyword id="KW-0479">Metal-binding</keyword>
<keyword id="KW-0520">NAD</keyword>
<keyword id="KW-0560">Oxidoreductase</keyword>
<keyword id="KW-0862">Zinc</keyword>
<feature type="chain" id="PRO_0000229866" description="Histidinol dehydrogenase">
    <location>
        <begin position="1"/>
        <end position="416"/>
    </location>
</feature>
<feature type="active site" description="Proton acceptor" evidence="1">
    <location>
        <position position="314"/>
    </location>
</feature>
<feature type="active site" description="Proton acceptor" evidence="1">
    <location>
        <position position="315"/>
    </location>
</feature>
<feature type="binding site" evidence="1">
    <location>
        <position position="117"/>
    </location>
    <ligand>
        <name>NAD(+)</name>
        <dbReference type="ChEBI" id="CHEBI:57540"/>
    </ligand>
</feature>
<feature type="binding site" evidence="1">
    <location>
        <position position="178"/>
    </location>
    <ligand>
        <name>NAD(+)</name>
        <dbReference type="ChEBI" id="CHEBI:57540"/>
    </ligand>
</feature>
<feature type="binding site" evidence="1">
    <location>
        <position position="201"/>
    </location>
    <ligand>
        <name>NAD(+)</name>
        <dbReference type="ChEBI" id="CHEBI:57540"/>
    </ligand>
</feature>
<feature type="binding site" evidence="1">
    <location>
        <position position="224"/>
    </location>
    <ligand>
        <name>substrate</name>
    </ligand>
</feature>
<feature type="binding site" evidence="1">
    <location>
        <position position="246"/>
    </location>
    <ligand>
        <name>substrate</name>
    </ligand>
</feature>
<feature type="binding site" evidence="1">
    <location>
        <position position="246"/>
    </location>
    <ligand>
        <name>Zn(2+)</name>
        <dbReference type="ChEBI" id="CHEBI:29105"/>
    </ligand>
</feature>
<feature type="binding site" evidence="1">
    <location>
        <position position="249"/>
    </location>
    <ligand>
        <name>substrate</name>
    </ligand>
</feature>
<feature type="binding site" evidence="1">
    <location>
        <position position="249"/>
    </location>
    <ligand>
        <name>Zn(2+)</name>
        <dbReference type="ChEBI" id="CHEBI:29105"/>
    </ligand>
</feature>
<feature type="binding site" evidence="1">
    <location>
        <position position="315"/>
    </location>
    <ligand>
        <name>substrate</name>
    </ligand>
</feature>
<feature type="binding site" evidence="1">
    <location>
        <position position="348"/>
    </location>
    <ligand>
        <name>substrate</name>
    </ligand>
</feature>
<feature type="binding site" evidence="1">
    <location>
        <position position="348"/>
    </location>
    <ligand>
        <name>Zn(2+)</name>
        <dbReference type="ChEBI" id="CHEBI:29105"/>
    </ligand>
</feature>
<feature type="binding site" evidence="1">
    <location>
        <position position="402"/>
    </location>
    <ligand>
        <name>substrate</name>
    </ligand>
</feature>
<feature type="binding site" evidence="1">
    <location>
        <position position="407"/>
    </location>
    <ligand>
        <name>substrate</name>
    </ligand>
</feature>
<feature type="binding site" evidence="1">
    <location>
        <position position="407"/>
    </location>
    <ligand>
        <name>Zn(2+)</name>
        <dbReference type="ChEBI" id="CHEBI:29105"/>
    </ligand>
</feature>
<protein>
    <recommendedName>
        <fullName evidence="1">Histidinol dehydrogenase</fullName>
        <shortName evidence="1">HDH</shortName>
        <ecNumber evidence="1">1.1.1.23</ecNumber>
    </recommendedName>
</protein>
<proteinExistence type="inferred from homology"/>
<name>HISX_STAAB</name>
<dbReference type="EC" id="1.1.1.23" evidence="1"/>
<dbReference type="EMBL" id="AJ938182">
    <property type="protein sequence ID" value="CAI82242.1"/>
    <property type="molecule type" value="Genomic_DNA"/>
</dbReference>
<dbReference type="RefSeq" id="WP_000930658.1">
    <property type="nucleotide sequence ID" value="NC_007622.1"/>
</dbReference>
<dbReference type="SMR" id="Q2YZB4"/>
<dbReference type="KEGG" id="sab:SAB2554c"/>
<dbReference type="HOGENOM" id="CLU_006732_3_3_9"/>
<dbReference type="UniPathway" id="UPA00031">
    <property type="reaction ID" value="UER00014"/>
</dbReference>
<dbReference type="GO" id="GO:0005829">
    <property type="term" value="C:cytosol"/>
    <property type="evidence" value="ECO:0007669"/>
    <property type="project" value="TreeGrafter"/>
</dbReference>
<dbReference type="GO" id="GO:0004399">
    <property type="term" value="F:histidinol dehydrogenase activity"/>
    <property type="evidence" value="ECO:0007669"/>
    <property type="project" value="UniProtKB-UniRule"/>
</dbReference>
<dbReference type="GO" id="GO:0051287">
    <property type="term" value="F:NAD binding"/>
    <property type="evidence" value="ECO:0007669"/>
    <property type="project" value="InterPro"/>
</dbReference>
<dbReference type="GO" id="GO:0008270">
    <property type="term" value="F:zinc ion binding"/>
    <property type="evidence" value="ECO:0007669"/>
    <property type="project" value="UniProtKB-UniRule"/>
</dbReference>
<dbReference type="GO" id="GO:0000105">
    <property type="term" value="P:L-histidine biosynthetic process"/>
    <property type="evidence" value="ECO:0007669"/>
    <property type="project" value="UniProtKB-UniRule"/>
</dbReference>
<dbReference type="CDD" id="cd06572">
    <property type="entry name" value="Histidinol_dh"/>
    <property type="match status" value="1"/>
</dbReference>
<dbReference type="FunFam" id="3.40.50.1980:FF:000001">
    <property type="entry name" value="Histidinol dehydrogenase"/>
    <property type="match status" value="1"/>
</dbReference>
<dbReference type="FunFam" id="3.40.50.1980:FF:000026">
    <property type="entry name" value="Histidinol dehydrogenase"/>
    <property type="match status" value="1"/>
</dbReference>
<dbReference type="Gene3D" id="1.20.5.1300">
    <property type="match status" value="1"/>
</dbReference>
<dbReference type="Gene3D" id="3.40.50.1980">
    <property type="entry name" value="Nitrogenase molybdenum iron protein domain"/>
    <property type="match status" value="2"/>
</dbReference>
<dbReference type="HAMAP" id="MF_01024">
    <property type="entry name" value="HisD"/>
    <property type="match status" value="1"/>
</dbReference>
<dbReference type="InterPro" id="IPR016161">
    <property type="entry name" value="Ald_DH/histidinol_DH"/>
</dbReference>
<dbReference type="InterPro" id="IPR001692">
    <property type="entry name" value="Histidinol_DH_CS"/>
</dbReference>
<dbReference type="InterPro" id="IPR022695">
    <property type="entry name" value="Histidinol_DH_monofunct"/>
</dbReference>
<dbReference type="InterPro" id="IPR012131">
    <property type="entry name" value="Hstdl_DH"/>
</dbReference>
<dbReference type="NCBIfam" id="TIGR00069">
    <property type="entry name" value="hisD"/>
    <property type="match status" value="1"/>
</dbReference>
<dbReference type="NCBIfam" id="NF010343">
    <property type="entry name" value="PRK13770.1"/>
    <property type="match status" value="1"/>
</dbReference>
<dbReference type="PANTHER" id="PTHR21256:SF2">
    <property type="entry name" value="HISTIDINE BIOSYNTHESIS TRIFUNCTIONAL PROTEIN"/>
    <property type="match status" value="1"/>
</dbReference>
<dbReference type="PANTHER" id="PTHR21256">
    <property type="entry name" value="HISTIDINOL DEHYDROGENASE HDH"/>
    <property type="match status" value="1"/>
</dbReference>
<dbReference type="Pfam" id="PF00815">
    <property type="entry name" value="Histidinol_dh"/>
    <property type="match status" value="1"/>
</dbReference>
<dbReference type="PIRSF" id="PIRSF000099">
    <property type="entry name" value="Histidinol_dh"/>
    <property type="match status" value="1"/>
</dbReference>
<dbReference type="PRINTS" id="PR00083">
    <property type="entry name" value="HOLDHDRGNASE"/>
</dbReference>
<dbReference type="SUPFAM" id="SSF53720">
    <property type="entry name" value="ALDH-like"/>
    <property type="match status" value="1"/>
</dbReference>
<dbReference type="PROSITE" id="PS00611">
    <property type="entry name" value="HISOL_DEHYDROGENASE"/>
    <property type="match status" value="1"/>
</dbReference>
<sequence>MLNAQQFLNQFSLEAPLDESLYPIIRDICQEVKVHGDKALKMYNLTFDHTKTDHLEISHEQIKAAFDTLDEKTKQALQQSYERIKAYQESIKQTNQQLEKSVECYEIYHPLESVGIYVPGGKASYPSTVLMTATLAQVAGVENIVVVTPPQPNGVSQEVLAACYITQVNQVFQVGGAQSIAALTYGTETIPKVDKIVGPGNQFVAYAKKYLFGQVGIDQIAGPTEIALIIDDTADLDAIVYDVFAQAEHDELARTYVISEDAQVLKDLESRITKALPNVDRYDIVSKSIANQHYLIHASNFDDACHVMNTIAPEHASIQTVNPQPYIEKVKYVGALFIGHYSPEVIGDYVAGPSHVLPTNRTARFTNGLSVNDFLTRNTVIHLSKDTFEQIADSAQHIAHVEALYNHQQSILIRQS</sequence>
<evidence type="ECO:0000255" key="1">
    <source>
        <dbReference type="HAMAP-Rule" id="MF_01024"/>
    </source>
</evidence>
<comment type="function">
    <text evidence="1">Catalyzes the sequential NAD-dependent oxidations of L-histidinol to L-histidinaldehyde and then to L-histidine.</text>
</comment>
<comment type="catalytic activity">
    <reaction evidence="1">
        <text>L-histidinol + 2 NAD(+) + H2O = L-histidine + 2 NADH + 3 H(+)</text>
        <dbReference type="Rhea" id="RHEA:20641"/>
        <dbReference type="ChEBI" id="CHEBI:15377"/>
        <dbReference type="ChEBI" id="CHEBI:15378"/>
        <dbReference type="ChEBI" id="CHEBI:57540"/>
        <dbReference type="ChEBI" id="CHEBI:57595"/>
        <dbReference type="ChEBI" id="CHEBI:57699"/>
        <dbReference type="ChEBI" id="CHEBI:57945"/>
        <dbReference type="EC" id="1.1.1.23"/>
    </reaction>
</comment>
<comment type="cofactor">
    <cofactor evidence="1">
        <name>Zn(2+)</name>
        <dbReference type="ChEBI" id="CHEBI:29105"/>
    </cofactor>
    <text evidence="1">Binds 1 zinc ion per subunit.</text>
</comment>
<comment type="pathway">
    <text evidence="1">Amino-acid biosynthesis; L-histidine biosynthesis; L-histidine from 5-phospho-alpha-D-ribose 1-diphosphate: step 9/9.</text>
</comment>
<comment type="similarity">
    <text evidence="1">Belongs to the histidinol dehydrogenase family.</text>
</comment>
<accession>Q2YZB4</accession>